<name>CCME_BRUA4</name>
<dbReference type="EMBL" id="CP000758">
    <property type="protein sequence ID" value="ABS15382.1"/>
    <property type="molecule type" value="Genomic_DNA"/>
</dbReference>
<dbReference type="RefSeq" id="WP_010661597.1">
    <property type="nucleotide sequence ID" value="NC_009667.1"/>
</dbReference>
<dbReference type="SMR" id="A6X2C8"/>
<dbReference type="STRING" id="439375.Oant_2670"/>
<dbReference type="GeneID" id="61316869"/>
<dbReference type="KEGG" id="oan:Oant_2670"/>
<dbReference type="eggNOG" id="COG2332">
    <property type="taxonomic scope" value="Bacteria"/>
</dbReference>
<dbReference type="HOGENOM" id="CLU_079503_1_1_5"/>
<dbReference type="PhylomeDB" id="A6X2C8"/>
<dbReference type="Proteomes" id="UP000002301">
    <property type="component" value="Chromosome 1"/>
</dbReference>
<dbReference type="GO" id="GO:0005886">
    <property type="term" value="C:plasma membrane"/>
    <property type="evidence" value="ECO:0007669"/>
    <property type="project" value="UniProtKB-SubCell"/>
</dbReference>
<dbReference type="GO" id="GO:0020037">
    <property type="term" value="F:heme binding"/>
    <property type="evidence" value="ECO:0007669"/>
    <property type="project" value="InterPro"/>
</dbReference>
<dbReference type="GO" id="GO:0046872">
    <property type="term" value="F:metal ion binding"/>
    <property type="evidence" value="ECO:0007669"/>
    <property type="project" value="UniProtKB-KW"/>
</dbReference>
<dbReference type="GO" id="GO:0017004">
    <property type="term" value="P:cytochrome complex assembly"/>
    <property type="evidence" value="ECO:0007669"/>
    <property type="project" value="UniProtKB-KW"/>
</dbReference>
<dbReference type="Gene3D" id="2.40.50.140">
    <property type="entry name" value="Nucleic acid-binding proteins"/>
    <property type="match status" value="1"/>
</dbReference>
<dbReference type="HAMAP" id="MF_01959">
    <property type="entry name" value="CcmE"/>
    <property type="match status" value="1"/>
</dbReference>
<dbReference type="InterPro" id="IPR004329">
    <property type="entry name" value="CcmE"/>
</dbReference>
<dbReference type="InterPro" id="IPR036127">
    <property type="entry name" value="CcmE-like_sf"/>
</dbReference>
<dbReference type="InterPro" id="IPR012340">
    <property type="entry name" value="NA-bd_OB-fold"/>
</dbReference>
<dbReference type="NCBIfam" id="NF009727">
    <property type="entry name" value="PRK13254.1-1"/>
    <property type="match status" value="1"/>
</dbReference>
<dbReference type="NCBIfam" id="NF009730">
    <property type="entry name" value="PRK13254.1-4"/>
    <property type="match status" value="1"/>
</dbReference>
<dbReference type="NCBIfam" id="NF009731">
    <property type="entry name" value="PRK13254.1-5"/>
    <property type="match status" value="1"/>
</dbReference>
<dbReference type="PANTHER" id="PTHR34128">
    <property type="entry name" value="CYTOCHROME C-TYPE BIOGENESIS PROTEIN CCME HOMOLOG, MITOCHONDRIAL"/>
    <property type="match status" value="1"/>
</dbReference>
<dbReference type="PANTHER" id="PTHR34128:SF2">
    <property type="entry name" value="CYTOCHROME C-TYPE BIOGENESIS PROTEIN CCME HOMOLOG, MITOCHONDRIAL"/>
    <property type="match status" value="1"/>
</dbReference>
<dbReference type="Pfam" id="PF03100">
    <property type="entry name" value="CcmE"/>
    <property type="match status" value="1"/>
</dbReference>
<dbReference type="SUPFAM" id="SSF82093">
    <property type="entry name" value="Heme chaperone CcmE"/>
    <property type="match status" value="1"/>
</dbReference>
<proteinExistence type="inferred from homology"/>
<comment type="function">
    <text evidence="1">Heme chaperone required for the biogenesis of c-type cytochromes. Transiently binds heme delivered by CcmC and transfers the heme to apo-cytochromes in a process facilitated by CcmF and CcmH.</text>
</comment>
<comment type="subcellular location">
    <subcellularLocation>
        <location evidence="1">Cell inner membrane</location>
        <topology evidence="1">Single-pass type II membrane protein</topology>
        <orientation evidence="1">Periplasmic side</orientation>
    </subcellularLocation>
</comment>
<comment type="similarity">
    <text evidence="1">Belongs to the CcmE/CycJ family.</text>
</comment>
<sequence>MSATAEDNARGAKPAGNFARTVSQRKRKRLFLIGGALAVLAVAVGLMLMAFSQDIRFFRTPADLTEQDMASGSRFRLGGLVEEGSVSREGSELRFTVTDTIKTVKVVFEGIPPDLFREGQGVVAEGRFGDDGVFRADNVLAKHDENYVPKDLADSLKEKGVWEGK</sequence>
<keyword id="KW-0997">Cell inner membrane</keyword>
<keyword id="KW-1003">Cell membrane</keyword>
<keyword id="KW-0201">Cytochrome c-type biogenesis</keyword>
<keyword id="KW-0349">Heme</keyword>
<keyword id="KW-0408">Iron</keyword>
<keyword id="KW-0472">Membrane</keyword>
<keyword id="KW-0479">Metal-binding</keyword>
<keyword id="KW-1185">Reference proteome</keyword>
<keyword id="KW-0735">Signal-anchor</keyword>
<keyword id="KW-0812">Transmembrane</keyword>
<keyword id="KW-1133">Transmembrane helix</keyword>
<protein>
    <recommendedName>
        <fullName evidence="1">Cytochrome c-type biogenesis protein CcmE</fullName>
    </recommendedName>
    <alternativeName>
        <fullName evidence="1">Cytochrome c maturation protein E</fullName>
    </alternativeName>
    <alternativeName>
        <fullName evidence="1">Heme chaperone CcmE</fullName>
    </alternativeName>
</protein>
<evidence type="ECO:0000255" key="1">
    <source>
        <dbReference type="HAMAP-Rule" id="MF_01959"/>
    </source>
</evidence>
<reference key="1">
    <citation type="journal article" date="2011" name="J. Bacteriol.">
        <title>Genome of Ochrobactrum anthropi ATCC 49188 T, a versatile opportunistic pathogen and symbiont of several eukaryotic hosts.</title>
        <authorList>
            <person name="Chain P.S."/>
            <person name="Lang D.M."/>
            <person name="Comerci D.J."/>
            <person name="Malfatti S.A."/>
            <person name="Vergez L.M."/>
            <person name="Shin M."/>
            <person name="Ugalde R.A."/>
            <person name="Garcia E."/>
            <person name="Tolmasky M.E."/>
        </authorList>
    </citation>
    <scope>NUCLEOTIDE SEQUENCE [LARGE SCALE GENOMIC DNA]</scope>
    <source>
        <strain>ATCC 49188 / DSM 6882 / CCUG 24695 / JCM 21032 / LMG 3331 / NBRC 15819 / NCTC 12168 / Alc 37</strain>
    </source>
</reference>
<gene>
    <name evidence="1" type="primary">ccmE</name>
    <name evidence="1" type="synonym">cycJ</name>
    <name type="ordered locus">Oant_2670</name>
</gene>
<feature type="chain" id="PRO_1000070826" description="Cytochrome c-type biogenesis protein CcmE">
    <location>
        <begin position="1"/>
        <end position="165"/>
    </location>
</feature>
<feature type="topological domain" description="Cytoplasmic" evidence="1">
    <location>
        <begin position="1"/>
        <end position="29"/>
    </location>
</feature>
<feature type="transmembrane region" description="Helical; Signal-anchor for type II membrane protein" evidence="1">
    <location>
        <begin position="30"/>
        <end position="50"/>
    </location>
</feature>
<feature type="topological domain" description="Periplasmic" evidence="1">
    <location>
        <begin position="51"/>
        <end position="165"/>
    </location>
</feature>
<feature type="binding site" description="covalent" evidence="1">
    <location>
        <position position="143"/>
    </location>
    <ligand>
        <name>heme</name>
        <dbReference type="ChEBI" id="CHEBI:30413"/>
    </ligand>
</feature>
<feature type="binding site" description="axial binding residue" evidence="1">
    <location>
        <position position="147"/>
    </location>
    <ligand>
        <name>heme</name>
        <dbReference type="ChEBI" id="CHEBI:30413"/>
    </ligand>
    <ligandPart>
        <name>Fe</name>
        <dbReference type="ChEBI" id="CHEBI:18248"/>
    </ligandPart>
</feature>
<accession>A6X2C8</accession>
<organism>
    <name type="scientific">Brucella anthropi (strain ATCC 49188 / DSM 6882 / CCUG 24695 / JCM 21032 / LMG 3331 / NBRC 15819 / NCTC 12168 / Alc 37)</name>
    <name type="common">Ochrobactrum anthropi</name>
    <dbReference type="NCBI Taxonomy" id="439375"/>
    <lineage>
        <taxon>Bacteria</taxon>
        <taxon>Pseudomonadati</taxon>
        <taxon>Pseudomonadota</taxon>
        <taxon>Alphaproteobacteria</taxon>
        <taxon>Hyphomicrobiales</taxon>
        <taxon>Brucellaceae</taxon>
        <taxon>Brucella/Ochrobactrum group</taxon>
        <taxon>Brucella</taxon>
    </lineage>
</organism>